<proteinExistence type="inferred from homology"/>
<geneLocation type="chloroplast"/>
<organism>
    <name type="scientific">Diacronema lutheri</name>
    <name type="common">Unicellular marine alga</name>
    <name type="synonym">Monochrysis lutheri</name>
    <dbReference type="NCBI Taxonomy" id="2081491"/>
    <lineage>
        <taxon>Eukaryota</taxon>
        <taxon>Haptista</taxon>
        <taxon>Haptophyta</taxon>
        <taxon>Pavlovales</taxon>
        <taxon>Pavlovaceae</taxon>
        <taxon>Diacronema</taxon>
    </lineage>
</organism>
<keyword id="KW-0067">ATP-binding</keyword>
<keyword id="KW-0143">Chaperone</keyword>
<keyword id="KW-0150">Chloroplast</keyword>
<keyword id="KW-0547">Nucleotide-binding</keyword>
<keyword id="KW-0934">Plastid</keyword>
<keyword id="KW-0346">Stress response</keyword>
<dbReference type="EMBL" id="X59555">
    <property type="protein sequence ID" value="CAA42154.1"/>
    <property type="molecule type" value="Genomic_DNA"/>
</dbReference>
<dbReference type="PIR" id="S20516">
    <property type="entry name" value="S20516"/>
</dbReference>
<dbReference type="SMR" id="P30722"/>
<dbReference type="GO" id="GO:0009507">
    <property type="term" value="C:chloroplast"/>
    <property type="evidence" value="ECO:0007669"/>
    <property type="project" value="UniProtKB-SubCell"/>
</dbReference>
<dbReference type="GO" id="GO:0005524">
    <property type="term" value="F:ATP binding"/>
    <property type="evidence" value="ECO:0007669"/>
    <property type="project" value="UniProtKB-UniRule"/>
</dbReference>
<dbReference type="GO" id="GO:0140662">
    <property type="term" value="F:ATP-dependent protein folding chaperone"/>
    <property type="evidence" value="ECO:0007669"/>
    <property type="project" value="InterPro"/>
</dbReference>
<dbReference type="GO" id="GO:0051082">
    <property type="term" value="F:unfolded protein binding"/>
    <property type="evidence" value="ECO:0007669"/>
    <property type="project" value="InterPro"/>
</dbReference>
<dbReference type="CDD" id="cd10234">
    <property type="entry name" value="ASKHA_NBD_HSP70_DnaK-like"/>
    <property type="match status" value="1"/>
</dbReference>
<dbReference type="FunFam" id="2.60.34.10:FF:000014">
    <property type="entry name" value="Chaperone protein DnaK HSP70"/>
    <property type="match status" value="1"/>
</dbReference>
<dbReference type="FunFam" id="3.30.420.40:FF:000004">
    <property type="entry name" value="Molecular chaperone DnaK"/>
    <property type="match status" value="1"/>
</dbReference>
<dbReference type="FunFam" id="3.90.640.10:FF:000003">
    <property type="entry name" value="Molecular chaperone DnaK"/>
    <property type="match status" value="1"/>
</dbReference>
<dbReference type="Gene3D" id="3.30.420.40">
    <property type="match status" value="2"/>
</dbReference>
<dbReference type="Gene3D" id="3.90.640.10">
    <property type="entry name" value="Actin, Chain A, domain 4"/>
    <property type="match status" value="1"/>
</dbReference>
<dbReference type="Gene3D" id="2.60.34.10">
    <property type="entry name" value="Substrate Binding Domain Of DNAk, Chain A, domain 1"/>
    <property type="match status" value="1"/>
</dbReference>
<dbReference type="HAMAP" id="MF_00332">
    <property type="entry name" value="DnaK"/>
    <property type="match status" value="1"/>
</dbReference>
<dbReference type="InterPro" id="IPR043129">
    <property type="entry name" value="ATPase_NBD"/>
</dbReference>
<dbReference type="InterPro" id="IPR012725">
    <property type="entry name" value="Chaperone_DnaK"/>
</dbReference>
<dbReference type="InterPro" id="IPR018181">
    <property type="entry name" value="Heat_shock_70_CS"/>
</dbReference>
<dbReference type="InterPro" id="IPR029047">
    <property type="entry name" value="HSP70_peptide-bd_sf"/>
</dbReference>
<dbReference type="InterPro" id="IPR013126">
    <property type="entry name" value="Hsp_70_fam"/>
</dbReference>
<dbReference type="NCBIfam" id="NF001413">
    <property type="entry name" value="PRK00290.1"/>
    <property type="match status" value="1"/>
</dbReference>
<dbReference type="NCBIfam" id="TIGR02350">
    <property type="entry name" value="prok_dnaK"/>
    <property type="match status" value="1"/>
</dbReference>
<dbReference type="PANTHER" id="PTHR19375">
    <property type="entry name" value="HEAT SHOCK PROTEIN 70KDA"/>
    <property type="match status" value="1"/>
</dbReference>
<dbReference type="Pfam" id="PF00012">
    <property type="entry name" value="HSP70"/>
    <property type="match status" value="1"/>
</dbReference>
<dbReference type="PRINTS" id="PR00301">
    <property type="entry name" value="HEATSHOCK70"/>
</dbReference>
<dbReference type="SUPFAM" id="SSF53067">
    <property type="entry name" value="Actin-like ATPase domain"/>
    <property type="match status" value="2"/>
</dbReference>
<dbReference type="SUPFAM" id="SSF100920">
    <property type="entry name" value="Heat shock protein 70kD (HSP70), peptide-binding domain"/>
    <property type="match status" value="1"/>
</dbReference>
<dbReference type="PROSITE" id="PS00297">
    <property type="entry name" value="HSP70_1"/>
    <property type="match status" value="1"/>
</dbReference>
<dbReference type="PROSITE" id="PS00329">
    <property type="entry name" value="HSP70_2"/>
    <property type="match status" value="1"/>
</dbReference>
<dbReference type="PROSITE" id="PS01036">
    <property type="entry name" value="HSP70_3"/>
    <property type="match status" value="1"/>
</dbReference>
<evidence type="ECO:0000250" key="1"/>
<evidence type="ECO:0000256" key="2">
    <source>
        <dbReference type="SAM" id="MobiDB-lite"/>
    </source>
</evidence>
<evidence type="ECO:0000305" key="3"/>
<feature type="chain" id="PRO_0000078610" description="Chaperone protein dnaK">
    <location>
        <begin position="1"/>
        <end position="629"/>
    </location>
</feature>
<feature type="region of interest" description="Disordered" evidence="2">
    <location>
        <begin position="599"/>
        <end position="629"/>
    </location>
</feature>
<feature type="compositionally biased region" description="Basic and acidic residues" evidence="2">
    <location>
        <begin position="601"/>
        <end position="612"/>
    </location>
</feature>
<feature type="compositionally biased region" description="Acidic residues" evidence="2">
    <location>
        <begin position="619"/>
        <end position="629"/>
    </location>
</feature>
<accession>P30722</accession>
<gene>
    <name type="primary">dnaK</name>
    <name type="synonym">hsp70</name>
</gene>
<name>DNAK_DIALT</name>
<reference key="1">
    <citation type="journal article" date="1992" name="Plant Mol. Biol.">
        <title>Heat shock Hsp70 protein is chloroplast-encoded in the chromophytic alga Pavlova lutherii.</title>
        <authorList>
            <person name="Scaramuzzi C.D."/>
            <person name="Stokes H.W."/>
            <person name="Hiller R.G."/>
        </authorList>
    </citation>
    <scope>NUCLEOTIDE SEQUENCE [GENOMIC DNA]</scope>
</reference>
<protein>
    <recommendedName>
        <fullName>Chaperone protein dnaK</fullName>
    </recommendedName>
    <alternativeName>
        <fullName>HSP70</fullName>
    </alternativeName>
    <alternativeName>
        <fullName>Heat shock 70 kDa protein</fullName>
    </alternativeName>
    <alternativeName>
        <fullName>Heat shock protein 70</fullName>
    </alternativeName>
</protein>
<comment type="function">
    <text evidence="1">Acts as a chaperone.</text>
</comment>
<comment type="subcellular location">
    <subcellularLocation>
        <location>Plastid</location>
        <location>Chloroplast</location>
    </subcellularLocation>
</comment>
<comment type="similarity">
    <text evidence="3">Belongs to the heat shock protein 70 family.</text>
</comment>
<sequence>MAKVVGIDLGTTNSVVAVMEGGKPTVITNSEGGTTTPSVVAYAKNGDLLVGQIAKRQAVINSENTFYSVKRFIGRPSKEVSDELRQTPYKIEDSEGKIRLKCPNLNKNFAAEEISAQVLRKLVNDANKYLGEKVEKAVITVPAYFNDSQRQATKDAGKIAGLEVLRIINEPTAASLAYGLDKKDNETILVFDLGGGTFDVSILEVGDGVFEVLSTSGDTRLGGDDFDEKIVKWLLNEFEKEEKFSLKGDSQALQRLTEAAEKAKIELSSLSQTEINLPFITANENGAKHIEKTLTGEKFESLCSDLFDRCRIPVENALKDAKLKPNQIDEVVLVGGSTRIPAVKKLVKDILGKEPNETVNPDEVVAIGAAIQAGVLSGEVKDILLLDVTPLSLGVETLGGVTTKIIPRNTTVPTKKSEIFSTAVDNQPNVEIHVLQGEREFARDNKSLGTFRLDGILPAPRGIPQIEVTFDIDANGILSVTAQDKGTSKQQSITISGASTLPKEEVEKMVKEAEQNAAADKEKGENIRVKNEADLYCYQAEKQISELPEALVNENQSLIKESKETVEMLKENIKKEDYDKIKENLKKLQEKLMEIGQKAYAKKEPLKDEDSNKAGSQDDFIDADFTESK</sequence>